<dbReference type="EC" id="7.1.1.-" evidence="1"/>
<dbReference type="EMBL" id="AP004638">
    <property type="protein sequence ID" value="BAB84280.1"/>
    <property type="molecule type" value="Genomic_DNA"/>
</dbReference>
<dbReference type="RefSeq" id="NP_569691.1">
    <property type="nucleotide sequence ID" value="NC_003386.1"/>
</dbReference>
<dbReference type="SMR" id="Q8WHX3"/>
<dbReference type="GeneID" id="2545123"/>
<dbReference type="GO" id="GO:0009535">
    <property type="term" value="C:chloroplast thylakoid membrane"/>
    <property type="evidence" value="ECO:0007669"/>
    <property type="project" value="UniProtKB-SubCell"/>
</dbReference>
<dbReference type="GO" id="GO:0051287">
    <property type="term" value="F:NAD binding"/>
    <property type="evidence" value="ECO:0007669"/>
    <property type="project" value="InterPro"/>
</dbReference>
<dbReference type="GO" id="GO:0016655">
    <property type="term" value="F:oxidoreductase activity, acting on NAD(P)H, quinone or similar compound as acceptor"/>
    <property type="evidence" value="ECO:0007669"/>
    <property type="project" value="UniProtKB-UniRule"/>
</dbReference>
<dbReference type="GO" id="GO:0048038">
    <property type="term" value="F:quinone binding"/>
    <property type="evidence" value="ECO:0007669"/>
    <property type="project" value="UniProtKB-KW"/>
</dbReference>
<dbReference type="GO" id="GO:0019684">
    <property type="term" value="P:photosynthesis, light reaction"/>
    <property type="evidence" value="ECO:0007669"/>
    <property type="project" value="UniProtKB-UniRule"/>
</dbReference>
<dbReference type="Gene3D" id="1.10.645.10">
    <property type="entry name" value="Cytochrome-c3 Hydrogenase, chain B"/>
    <property type="match status" value="1"/>
</dbReference>
<dbReference type="HAMAP" id="MF_01358">
    <property type="entry name" value="NDH1_NuoD"/>
    <property type="match status" value="1"/>
</dbReference>
<dbReference type="InterPro" id="IPR001135">
    <property type="entry name" value="NADH_Q_OxRdtase_suD"/>
</dbReference>
<dbReference type="InterPro" id="IPR014029">
    <property type="entry name" value="NADH_UbQ_OxRdtase_49kDa_CS"/>
</dbReference>
<dbReference type="InterPro" id="IPR022885">
    <property type="entry name" value="NDH1_su_D/H"/>
</dbReference>
<dbReference type="InterPro" id="IPR029014">
    <property type="entry name" value="NiFe-Hase_large"/>
</dbReference>
<dbReference type="NCBIfam" id="NF004739">
    <property type="entry name" value="PRK06075.1"/>
    <property type="match status" value="1"/>
</dbReference>
<dbReference type="NCBIfam" id="NF005649">
    <property type="entry name" value="PRK07415.1"/>
    <property type="match status" value="1"/>
</dbReference>
<dbReference type="PANTHER" id="PTHR11993:SF10">
    <property type="entry name" value="NADH DEHYDROGENASE [UBIQUINONE] IRON-SULFUR PROTEIN 2, MITOCHONDRIAL"/>
    <property type="match status" value="1"/>
</dbReference>
<dbReference type="PANTHER" id="PTHR11993">
    <property type="entry name" value="NADH-UBIQUINONE OXIDOREDUCTASE 49 KDA SUBUNIT"/>
    <property type="match status" value="1"/>
</dbReference>
<dbReference type="Pfam" id="PF00346">
    <property type="entry name" value="Complex1_49kDa"/>
    <property type="match status" value="1"/>
</dbReference>
<dbReference type="SUPFAM" id="SSF56762">
    <property type="entry name" value="HydB/Nqo4-like"/>
    <property type="match status" value="1"/>
</dbReference>
<dbReference type="PROSITE" id="PS00535">
    <property type="entry name" value="COMPLEX1_49K"/>
    <property type="match status" value="1"/>
</dbReference>
<evidence type="ECO:0000255" key="1">
    <source>
        <dbReference type="HAMAP-Rule" id="MF_01358"/>
    </source>
</evidence>
<name>NDHH_PSINU</name>
<proteinExistence type="inferred from homology"/>
<keyword id="KW-0150">Chloroplast</keyword>
<keyword id="KW-0472">Membrane</keyword>
<keyword id="KW-0520">NAD</keyword>
<keyword id="KW-0521">NADP</keyword>
<keyword id="KW-0934">Plastid</keyword>
<keyword id="KW-0618">Plastoquinone</keyword>
<keyword id="KW-0874">Quinone</keyword>
<keyword id="KW-0793">Thylakoid</keyword>
<keyword id="KW-1278">Translocase</keyword>
<keyword id="KW-0813">Transport</keyword>
<gene>
    <name evidence="1" type="primary">ndhH</name>
</gene>
<sequence>MAMLLKNKDQMIVSMGPHHPSMHGVLRLIVTLDGENVADCEPVLGYLHRGMEKIAENRTIIQYLPYVTRWDYLATMFTEAITVNAPEKLANIRIPKRASYIRVIMLELSRIASHLLWLGPFMADIGAQTPFFYILREREMIYDLFEAATGMRMMHNYFRIGGVAVDLPYGWIDKCLDFCDYFSPKISEYEKLIVHNPIFLERVKGVGFISREEAINWGLSGPMLRASGVQWDLRKVDHYECYDEVDWQIQWQKEGDSLARYLVRIGEMRESVKILQQALRIIPGGPYENLEARRLHQSQNLEWNDFDYQFMGKKSSPTFKLLKQEHYVRIEAPKGELGIFLIGNDSVFPWRWKIRPPGFINLQILPQLVRGMKLADIMPILGSIDIIMGEIDR</sequence>
<geneLocation type="chloroplast"/>
<comment type="function">
    <text evidence="1">NDH shuttles electrons from NAD(P)H:plastoquinone, via FMN and iron-sulfur (Fe-S) centers, to quinones in the photosynthetic chain and possibly in a chloroplast respiratory chain. The immediate electron acceptor for the enzyme in this species is believed to be plastoquinone. Couples the redox reaction to proton translocation, and thus conserves the redox energy in a proton gradient.</text>
</comment>
<comment type="catalytic activity">
    <reaction evidence="1">
        <text>a plastoquinone + NADH + (n+1) H(+)(in) = a plastoquinol + NAD(+) + n H(+)(out)</text>
        <dbReference type="Rhea" id="RHEA:42608"/>
        <dbReference type="Rhea" id="RHEA-COMP:9561"/>
        <dbReference type="Rhea" id="RHEA-COMP:9562"/>
        <dbReference type="ChEBI" id="CHEBI:15378"/>
        <dbReference type="ChEBI" id="CHEBI:17757"/>
        <dbReference type="ChEBI" id="CHEBI:57540"/>
        <dbReference type="ChEBI" id="CHEBI:57945"/>
        <dbReference type="ChEBI" id="CHEBI:62192"/>
    </reaction>
</comment>
<comment type="catalytic activity">
    <reaction evidence="1">
        <text>a plastoquinone + NADPH + (n+1) H(+)(in) = a plastoquinol + NADP(+) + n H(+)(out)</text>
        <dbReference type="Rhea" id="RHEA:42612"/>
        <dbReference type="Rhea" id="RHEA-COMP:9561"/>
        <dbReference type="Rhea" id="RHEA-COMP:9562"/>
        <dbReference type="ChEBI" id="CHEBI:15378"/>
        <dbReference type="ChEBI" id="CHEBI:17757"/>
        <dbReference type="ChEBI" id="CHEBI:57783"/>
        <dbReference type="ChEBI" id="CHEBI:58349"/>
        <dbReference type="ChEBI" id="CHEBI:62192"/>
    </reaction>
</comment>
<comment type="subunit">
    <text evidence="1">NDH is composed of at least 16 different subunits, 5 of which are encoded in the nucleus.</text>
</comment>
<comment type="subcellular location">
    <subcellularLocation>
        <location evidence="1">Plastid</location>
        <location evidence="1">Chloroplast thylakoid membrane</location>
        <topology evidence="1">Peripheral membrane protein</topology>
        <orientation evidence="1">Stromal side</orientation>
    </subcellularLocation>
</comment>
<comment type="similarity">
    <text evidence="1">Belongs to the complex I 49 kDa subunit family.</text>
</comment>
<feature type="chain" id="PRO_0000118609" description="NAD(P)H-quinone oxidoreductase subunit H, chloroplastic">
    <location>
        <begin position="1"/>
        <end position="393"/>
    </location>
</feature>
<organism>
    <name type="scientific">Psilotum nudum</name>
    <name type="common">Whisk fern</name>
    <name type="synonym">Lycopodium nudum</name>
    <dbReference type="NCBI Taxonomy" id="3240"/>
    <lineage>
        <taxon>Eukaryota</taxon>
        <taxon>Viridiplantae</taxon>
        <taxon>Streptophyta</taxon>
        <taxon>Embryophyta</taxon>
        <taxon>Tracheophyta</taxon>
        <taxon>Polypodiopsida</taxon>
        <taxon>Ophioglossidae</taxon>
        <taxon>Psilotales</taxon>
        <taxon>Psilotaceae</taxon>
        <taxon>Psilotum</taxon>
    </lineage>
</organism>
<protein>
    <recommendedName>
        <fullName evidence="1">NAD(P)H-quinone oxidoreductase subunit H, chloroplastic</fullName>
        <ecNumber evidence="1">7.1.1.-</ecNumber>
    </recommendedName>
    <alternativeName>
        <fullName>NAD(P)H dehydrogenase subunit H</fullName>
    </alternativeName>
    <alternativeName>
        <fullName evidence="1">NADH-plastoquinone oxidoreductase 49 kDa subunit</fullName>
    </alternativeName>
    <alternativeName>
        <fullName evidence="1">NADH-plastoquinone oxidoreductase subunit H</fullName>
    </alternativeName>
</protein>
<reference key="1">
    <citation type="journal article" date="2004" name="Mol. Biol. Evol.">
        <title>Chloroplast phylogeny indicates that bryophytes are monophyletic.</title>
        <authorList>
            <person name="Nishiyama T."/>
            <person name="Wolf P.G."/>
            <person name="Kugita M."/>
            <person name="Sinclair R.B."/>
            <person name="Sugita M."/>
            <person name="Sugiura C."/>
            <person name="Wakasugi T."/>
            <person name="Yamada K."/>
            <person name="Yoshinaga K."/>
            <person name="Yamaguchi K."/>
            <person name="Ueda K."/>
            <person name="Hasebe M."/>
        </authorList>
    </citation>
    <scope>NUCLEOTIDE SEQUENCE [LARGE SCALE GENOMIC DNA]</scope>
    <source>
        <strain>Kingyoku</strain>
    </source>
</reference>
<accession>Q8WHX3</accession>